<accession>Q9HHA1</accession>
<gene>
    <name evidence="1" type="primary">proA</name>
    <name type="ordered locus">MA_4100</name>
</gene>
<reference key="1">
    <citation type="journal article" date="2002" name="J. Bacteriol.">
        <title>Directed mutagenesis and plasmid-based complementation in the methanogenic archaeon Methanosarcina acetivorans C2A demonstrated by genetic analysis of proline biosynthesis.</title>
        <authorList>
            <person name="Zhang J.K."/>
            <person name="White A.K."/>
            <person name="Kuettner H.C."/>
            <person name="Boccazzi P."/>
            <person name="Metcalf W.W."/>
        </authorList>
    </citation>
    <scope>NUCLEOTIDE SEQUENCE [GENOMIC DNA]</scope>
    <source>
        <strain>ATCC 35395 / DSM 2834 / JCM 12185 / C2A</strain>
    </source>
</reference>
<reference key="2">
    <citation type="journal article" date="2002" name="Genome Res.">
        <title>The genome of Methanosarcina acetivorans reveals extensive metabolic and physiological diversity.</title>
        <authorList>
            <person name="Galagan J.E."/>
            <person name="Nusbaum C."/>
            <person name="Roy A."/>
            <person name="Endrizzi M.G."/>
            <person name="Macdonald P."/>
            <person name="FitzHugh W."/>
            <person name="Calvo S."/>
            <person name="Engels R."/>
            <person name="Smirnov S."/>
            <person name="Atnoor D."/>
            <person name="Brown A."/>
            <person name="Allen N."/>
            <person name="Naylor J."/>
            <person name="Stange-Thomann N."/>
            <person name="DeArellano K."/>
            <person name="Johnson R."/>
            <person name="Linton L."/>
            <person name="McEwan P."/>
            <person name="McKernan K."/>
            <person name="Talamas J."/>
            <person name="Tirrell A."/>
            <person name="Ye W."/>
            <person name="Zimmer A."/>
            <person name="Barber R.D."/>
            <person name="Cann I."/>
            <person name="Graham D.E."/>
            <person name="Grahame D.A."/>
            <person name="Guss A.M."/>
            <person name="Hedderich R."/>
            <person name="Ingram-Smith C."/>
            <person name="Kuettner H.C."/>
            <person name="Krzycki J.A."/>
            <person name="Leigh J.A."/>
            <person name="Li W."/>
            <person name="Liu J."/>
            <person name="Mukhopadhyay B."/>
            <person name="Reeve J.N."/>
            <person name="Smith K."/>
            <person name="Springer T.A."/>
            <person name="Umayam L.A."/>
            <person name="White O."/>
            <person name="White R.H."/>
            <person name="de Macario E.C."/>
            <person name="Ferry J.G."/>
            <person name="Jarrell K.F."/>
            <person name="Jing H."/>
            <person name="Macario A.J.L."/>
            <person name="Paulsen I.T."/>
            <person name="Pritchett M."/>
            <person name="Sowers K.R."/>
            <person name="Swanson R.V."/>
            <person name="Zinder S.H."/>
            <person name="Lander E."/>
            <person name="Metcalf W.W."/>
            <person name="Birren B."/>
        </authorList>
    </citation>
    <scope>NUCLEOTIDE SEQUENCE [LARGE SCALE GENOMIC DNA]</scope>
    <source>
        <strain>ATCC 35395 / DSM 2834 / JCM 12185 / C2A</strain>
    </source>
</reference>
<organism>
    <name type="scientific">Methanosarcina acetivorans (strain ATCC 35395 / DSM 2834 / JCM 12185 / C2A)</name>
    <dbReference type="NCBI Taxonomy" id="188937"/>
    <lineage>
        <taxon>Archaea</taxon>
        <taxon>Methanobacteriati</taxon>
        <taxon>Methanobacteriota</taxon>
        <taxon>Stenosarchaea group</taxon>
        <taxon>Methanomicrobia</taxon>
        <taxon>Methanosarcinales</taxon>
        <taxon>Methanosarcinaceae</taxon>
        <taxon>Methanosarcina</taxon>
    </lineage>
</organism>
<sequence length="447" mass="49360">MAEDIETKVVKAKKASIELSSVSEEVKNRALEAMAESLDRERKAILEANSKDLEYASELKKVGKLTQALVDRLKVTDSKIDGMIAGIMDVIKLKDPVGETLSTLELDNDLILYQISCPIGLIGVIFESRPDVVPQVMSLCLKSGNATIFKGGSEARESNRTIFEILVKAIESTEGMPKGAFQLMETREEIMSLLSLDAYVDLLIPRGSNEFVKFIQDNTKIPVLGHTSGICHIYVDEFADPDTAWKVCFDAKVQYPAVCNAIETLLVNRKIAEAFLPKMAEMYIKAGVELRCDKDSYILLAEKGLSPLSKATEEDWSLEYNDLILSIKLVDTIKEAIAHINTFGSHHTDGIITENASRRKEFIGLVDSSSVMVNASTRFADGYRYGKGAEVGISTNKIHSRGPVGMEGLLIYKYILMGKGQVVADYAGENAKPYTHRKLDLKFADVN</sequence>
<protein>
    <recommendedName>
        <fullName evidence="1">Gamma-glutamyl phosphate reductase</fullName>
        <shortName evidence="1">GPR</shortName>
        <ecNumber evidence="1">1.2.1.41</ecNumber>
    </recommendedName>
    <alternativeName>
        <fullName evidence="1">Glutamate-5-semialdehyde dehydrogenase</fullName>
    </alternativeName>
    <alternativeName>
        <fullName evidence="1">Glutamyl-gamma-semialdehyde dehydrogenase</fullName>
        <shortName evidence="1">GSA dehydrogenase</shortName>
    </alternativeName>
</protein>
<evidence type="ECO:0000255" key="1">
    <source>
        <dbReference type="HAMAP-Rule" id="MF_00412"/>
    </source>
</evidence>
<feature type="chain" id="PRO_0000189821" description="Gamma-glutamyl phosphate reductase">
    <location>
        <begin position="1"/>
        <end position="447"/>
    </location>
</feature>
<comment type="function">
    <text evidence="1">Catalyzes the NADPH-dependent reduction of L-glutamate 5-phosphate into L-glutamate 5-semialdehyde and phosphate. The product spontaneously undergoes cyclization to form 1-pyrroline-5-carboxylate.</text>
</comment>
<comment type="catalytic activity">
    <reaction evidence="1">
        <text>L-glutamate 5-semialdehyde + phosphate + NADP(+) = L-glutamyl 5-phosphate + NADPH + H(+)</text>
        <dbReference type="Rhea" id="RHEA:19541"/>
        <dbReference type="ChEBI" id="CHEBI:15378"/>
        <dbReference type="ChEBI" id="CHEBI:43474"/>
        <dbReference type="ChEBI" id="CHEBI:57783"/>
        <dbReference type="ChEBI" id="CHEBI:58066"/>
        <dbReference type="ChEBI" id="CHEBI:58274"/>
        <dbReference type="ChEBI" id="CHEBI:58349"/>
        <dbReference type="EC" id="1.2.1.41"/>
    </reaction>
</comment>
<comment type="pathway">
    <text evidence="1">Amino-acid biosynthesis; L-proline biosynthesis; L-glutamate 5-semialdehyde from L-glutamate: step 2/2.</text>
</comment>
<comment type="subcellular location">
    <subcellularLocation>
        <location evidence="1">Cytoplasm</location>
    </subcellularLocation>
</comment>
<comment type="similarity">
    <text evidence="1">Belongs to the gamma-glutamyl phosphate reductase family.</text>
</comment>
<name>PROA_METAC</name>
<proteinExistence type="inferred from homology"/>
<dbReference type="EC" id="1.2.1.41" evidence="1"/>
<dbReference type="EMBL" id="AF305580">
    <property type="protein sequence ID" value="AAG22031.1"/>
    <property type="molecule type" value="Genomic_DNA"/>
</dbReference>
<dbReference type="EMBL" id="AE010299">
    <property type="protein sequence ID" value="AAM07448.1"/>
    <property type="molecule type" value="Genomic_DNA"/>
</dbReference>
<dbReference type="RefSeq" id="WP_011023992.1">
    <property type="nucleotide sequence ID" value="NC_003552.1"/>
</dbReference>
<dbReference type="SMR" id="Q9HHA1"/>
<dbReference type="STRING" id="188937.MA_4100"/>
<dbReference type="EnsemblBacteria" id="AAM07448">
    <property type="protein sequence ID" value="AAM07448"/>
    <property type="gene ID" value="MA_4100"/>
</dbReference>
<dbReference type="GeneID" id="1475994"/>
<dbReference type="KEGG" id="mac:MA_4100"/>
<dbReference type="HOGENOM" id="CLU_030231_0_1_2"/>
<dbReference type="InParanoid" id="Q9HHA1"/>
<dbReference type="OrthoDB" id="53031at2157"/>
<dbReference type="PhylomeDB" id="Q9HHA1"/>
<dbReference type="UniPathway" id="UPA00098">
    <property type="reaction ID" value="UER00360"/>
</dbReference>
<dbReference type="Proteomes" id="UP000002487">
    <property type="component" value="Chromosome"/>
</dbReference>
<dbReference type="GO" id="GO:0005737">
    <property type="term" value="C:cytoplasm"/>
    <property type="evidence" value="ECO:0007669"/>
    <property type="project" value="UniProtKB-SubCell"/>
</dbReference>
<dbReference type="GO" id="GO:0004350">
    <property type="term" value="F:glutamate-5-semialdehyde dehydrogenase activity"/>
    <property type="evidence" value="ECO:0000318"/>
    <property type="project" value="GO_Central"/>
</dbReference>
<dbReference type="GO" id="GO:0050661">
    <property type="term" value="F:NADP binding"/>
    <property type="evidence" value="ECO:0007669"/>
    <property type="project" value="InterPro"/>
</dbReference>
<dbReference type="GO" id="GO:0055129">
    <property type="term" value="P:L-proline biosynthetic process"/>
    <property type="evidence" value="ECO:0007669"/>
    <property type="project" value="UniProtKB-UniRule"/>
</dbReference>
<dbReference type="CDD" id="cd07079">
    <property type="entry name" value="ALDH_F18-19_ProA-GPR"/>
    <property type="match status" value="1"/>
</dbReference>
<dbReference type="FunFam" id="3.40.309.10:FF:000006">
    <property type="entry name" value="Gamma-glutamyl phosphate reductase"/>
    <property type="match status" value="1"/>
</dbReference>
<dbReference type="Gene3D" id="3.40.605.10">
    <property type="entry name" value="Aldehyde Dehydrogenase, Chain A, domain 1"/>
    <property type="match status" value="1"/>
</dbReference>
<dbReference type="Gene3D" id="3.40.309.10">
    <property type="entry name" value="Aldehyde Dehydrogenase, Chain A, domain 2"/>
    <property type="match status" value="1"/>
</dbReference>
<dbReference type="HAMAP" id="MF_00412">
    <property type="entry name" value="ProA"/>
    <property type="match status" value="1"/>
</dbReference>
<dbReference type="InterPro" id="IPR016161">
    <property type="entry name" value="Ald_DH/histidinol_DH"/>
</dbReference>
<dbReference type="InterPro" id="IPR016163">
    <property type="entry name" value="Ald_DH_C"/>
</dbReference>
<dbReference type="InterPro" id="IPR016162">
    <property type="entry name" value="Ald_DH_N"/>
</dbReference>
<dbReference type="InterPro" id="IPR015590">
    <property type="entry name" value="Aldehyde_DH_dom"/>
</dbReference>
<dbReference type="InterPro" id="IPR020593">
    <property type="entry name" value="G-glutamylP_reductase_CS"/>
</dbReference>
<dbReference type="InterPro" id="IPR012134">
    <property type="entry name" value="Glu-5-SA_DH"/>
</dbReference>
<dbReference type="InterPro" id="IPR000965">
    <property type="entry name" value="GPR_dom"/>
</dbReference>
<dbReference type="NCBIfam" id="NF001221">
    <property type="entry name" value="PRK00197.1"/>
    <property type="match status" value="1"/>
</dbReference>
<dbReference type="NCBIfam" id="TIGR00407">
    <property type="entry name" value="proA"/>
    <property type="match status" value="1"/>
</dbReference>
<dbReference type="PANTHER" id="PTHR11063:SF8">
    <property type="entry name" value="DELTA-1-PYRROLINE-5-CARBOXYLATE SYNTHASE"/>
    <property type="match status" value="1"/>
</dbReference>
<dbReference type="PANTHER" id="PTHR11063">
    <property type="entry name" value="GLUTAMATE SEMIALDEHYDE DEHYDROGENASE"/>
    <property type="match status" value="1"/>
</dbReference>
<dbReference type="Pfam" id="PF00171">
    <property type="entry name" value="Aldedh"/>
    <property type="match status" value="1"/>
</dbReference>
<dbReference type="PIRSF" id="PIRSF000151">
    <property type="entry name" value="GPR"/>
    <property type="match status" value="1"/>
</dbReference>
<dbReference type="SUPFAM" id="SSF53720">
    <property type="entry name" value="ALDH-like"/>
    <property type="match status" value="1"/>
</dbReference>
<dbReference type="PROSITE" id="PS01223">
    <property type="entry name" value="PROA"/>
    <property type="match status" value="1"/>
</dbReference>
<keyword id="KW-0028">Amino-acid biosynthesis</keyword>
<keyword id="KW-0963">Cytoplasm</keyword>
<keyword id="KW-0521">NADP</keyword>
<keyword id="KW-0560">Oxidoreductase</keyword>
<keyword id="KW-0641">Proline biosynthesis</keyword>
<keyword id="KW-1185">Reference proteome</keyword>